<protein>
    <recommendedName>
        <fullName evidence="1">DNA-directed RNA polymerase subunit beta</fullName>
        <shortName evidence="1">RNAP subunit beta</shortName>
        <ecNumber evidence="1">2.7.7.6</ecNumber>
    </recommendedName>
    <alternativeName>
        <fullName evidence="1">RNA polymerase subunit beta</fullName>
    </alternativeName>
    <alternativeName>
        <fullName evidence="1">Transcriptase subunit beta</fullName>
    </alternativeName>
</protein>
<sequence>MTQSFTGRKRVRKVFGHIPQIAEMPNLIEVQKYSYDQFLQVDEPTGGREEQGLQAVFKSVFPISDFSESSTLEFVNYEFETPKYDVEECQQRGMTFAAPLKVTLRLIVFEVDEDTGAKSVKDIKEQDVYMGDMPLMTENGTFVINGTERVIVSQMHRSPGVFFDHDKGKTHSSGKLLFAARVIPYRGSWLDFEFDAKDIVFVRIDRRRKLPVTTLLYALGLDSEEILSTFYNSVTFTKVKQGWRVPFNADRYRGAKPERDLIDAKTGKVVVEAGRKVTPRLAKKLAEEGLKELLVQDEDIHTRYLAQEIVNMETGEIFAEAGDEITPELLEALVEAGHTDIITLDIDHVNTGAFIRNTLAVDKCTNREQALIDIYRVMRPGEPPTADTAEALFKSLFFDAERYDLSAVGRVKMNMRLDLDVSDTVRVLRKEDILAVIKTLVGLRDGKGEIDDIDNLGNRRVRSVGELMENQYRVGLLRMERAIKERMSSVDIDTVMPHDLINAKPAAAAVREFFGSSQLSQFMDQTNPLSEITHKRRLSALGPGGLTRERAGFEVRDVHPTHYGRICPIETPEGPNIGLINSLATFARVNKYGFIESPYRRVKGGKLADDIVYLSAMEESRYRIAQANVAIGKKGEIEGELVNCRIDGDFEMVPPDQVDFVDVSPKQIVSVAAALIPFLENDDANRALMGSNMQRQAVPLIRSEAPLVGTGMEEVVARDSGAAIGARRTGVVDQVDATRIVIRATEEVDSSKSGVDIYNLRKFQRSNQNTCINQRPLVRVGDQVKKGDIIADGPSTELGDLALGRNVLVAFMPWNGYNFEDSILISERIVRDDVFTSIHIEEFEVMARDTKLGPEEITRDIPNVGEEALKNLDEAGIVYIGAEVNPGDILCGKITPKGESPMTPEEKLLRAIFGEKASDVRDTSLRLPPGVQGTVVEVRVFNRHGIDKDERAMAIEREEIERLAKDRDDEFGILDRNVYGRLSEILLGKQIASGPKGMEADAKVTQANLDDLSHGQWWQIALKNEKAQSEIEALKKQYDESKERLEARFADKVDKLQRGDELPPGVMKMVKVFVAVKRKLQTGDKMAGRHGNKGVISRIVPMEDMPYLDDGQPVDIVLNPLGVPSRMNVGQILETHLGWACAGLGKKIEVALDAYHRENKPKELKDLVKQIYGDDPTVASLDEEQLVEMAGNLTNGVPIATPVFDGAREPEIVEMLELAGLDRSGQVTLHDGRTGEPFDRKVTVGYIYMLKLHHLVDDKIHARSIGPYSLVTQQPLGGKAQFGGQRFGEMEVWALEAYGAAYTLQEMLTVKSDDVAGRTKVYEAIVRGDDTFEAGIPESFNVLVKEMRSLGLNVELLTPAAN</sequence>
<organism>
    <name type="scientific">Parvibaculum lavamentivorans (strain DS-1 / DSM 13023 / NCIMB 13966)</name>
    <dbReference type="NCBI Taxonomy" id="402881"/>
    <lineage>
        <taxon>Bacteria</taxon>
        <taxon>Pseudomonadati</taxon>
        <taxon>Pseudomonadota</taxon>
        <taxon>Alphaproteobacteria</taxon>
        <taxon>Hyphomicrobiales</taxon>
        <taxon>Parvibaculaceae</taxon>
        <taxon>Parvibaculum</taxon>
    </lineage>
</organism>
<proteinExistence type="inferred from homology"/>
<keyword id="KW-0240">DNA-directed RNA polymerase</keyword>
<keyword id="KW-0548">Nucleotidyltransferase</keyword>
<keyword id="KW-1185">Reference proteome</keyword>
<keyword id="KW-0804">Transcription</keyword>
<keyword id="KW-0808">Transferase</keyword>
<dbReference type="EC" id="2.7.7.6" evidence="1"/>
<dbReference type="EMBL" id="CP000774">
    <property type="protein sequence ID" value="ABS64337.1"/>
    <property type="molecule type" value="Genomic_DNA"/>
</dbReference>
<dbReference type="RefSeq" id="WP_012111652.1">
    <property type="nucleotide sequence ID" value="NC_009719.1"/>
</dbReference>
<dbReference type="SMR" id="A7HWQ4"/>
<dbReference type="STRING" id="402881.Plav_2729"/>
<dbReference type="KEGG" id="pla:Plav_2729"/>
<dbReference type="eggNOG" id="COG0085">
    <property type="taxonomic scope" value="Bacteria"/>
</dbReference>
<dbReference type="HOGENOM" id="CLU_000524_4_0_5"/>
<dbReference type="OrthoDB" id="9803954at2"/>
<dbReference type="Proteomes" id="UP000006377">
    <property type="component" value="Chromosome"/>
</dbReference>
<dbReference type="GO" id="GO:0000428">
    <property type="term" value="C:DNA-directed RNA polymerase complex"/>
    <property type="evidence" value="ECO:0007669"/>
    <property type="project" value="UniProtKB-KW"/>
</dbReference>
<dbReference type="GO" id="GO:0003677">
    <property type="term" value="F:DNA binding"/>
    <property type="evidence" value="ECO:0007669"/>
    <property type="project" value="UniProtKB-UniRule"/>
</dbReference>
<dbReference type="GO" id="GO:0003899">
    <property type="term" value="F:DNA-directed RNA polymerase activity"/>
    <property type="evidence" value="ECO:0007669"/>
    <property type="project" value="UniProtKB-UniRule"/>
</dbReference>
<dbReference type="GO" id="GO:0032549">
    <property type="term" value="F:ribonucleoside binding"/>
    <property type="evidence" value="ECO:0007669"/>
    <property type="project" value="InterPro"/>
</dbReference>
<dbReference type="GO" id="GO:0006351">
    <property type="term" value="P:DNA-templated transcription"/>
    <property type="evidence" value="ECO:0007669"/>
    <property type="project" value="UniProtKB-UniRule"/>
</dbReference>
<dbReference type="CDD" id="cd00653">
    <property type="entry name" value="RNA_pol_B_RPB2"/>
    <property type="match status" value="1"/>
</dbReference>
<dbReference type="FunFam" id="2.40.50.100:FF:000006">
    <property type="entry name" value="DNA-directed RNA polymerase subunit beta"/>
    <property type="match status" value="1"/>
</dbReference>
<dbReference type="FunFam" id="3.90.1800.10:FF:000001">
    <property type="entry name" value="DNA-directed RNA polymerase subunit beta"/>
    <property type="match status" value="1"/>
</dbReference>
<dbReference type="Gene3D" id="2.40.50.100">
    <property type="match status" value="1"/>
</dbReference>
<dbReference type="Gene3D" id="2.40.50.150">
    <property type="match status" value="1"/>
</dbReference>
<dbReference type="Gene3D" id="3.90.1100.10">
    <property type="match status" value="2"/>
</dbReference>
<dbReference type="Gene3D" id="2.30.150.10">
    <property type="entry name" value="DNA-directed RNA polymerase, beta subunit, external 1 domain"/>
    <property type="match status" value="1"/>
</dbReference>
<dbReference type="Gene3D" id="2.40.270.10">
    <property type="entry name" value="DNA-directed RNA polymerase, subunit 2, domain 6"/>
    <property type="match status" value="1"/>
</dbReference>
<dbReference type="Gene3D" id="3.90.1800.10">
    <property type="entry name" value="RNA polymerase alpha subunit dimerisation domain"/>
    <property type="match status" value="1"/>
</dbReference>
<dbReference type="Gene3D" id="3.90.1110.10">
    <property type="entry name" value="RNA polymerase Rpb2, domain 2"/>
    <property type="match status" value="1"/>
</dbReference>
<dbReference type="HAMAP" id="MF_01321">
    <property type="entry name" value="RNApol_bact_RpoB"/>
    <property type="match status" value="1"/>
</dbReference>
<dbReference type="InterPro" id="IPR042107">
    <property type="entry name" value="DNA-dir_RNA_pol_bsu_ext_1_sf"/>
</dbReference>
<dbReference type="InterPro" id="IPR019462">
    <property type="entry name" value="DNA-dir_RNA_pol_bsu_external_1"/>
</dbReference>
<dbReference type="InterPro" id="IPR015712">
    <property type="entry name" value="DNA-dir_RNA_pol_su2"/>
</dbReference>
<dbReference type="InterPro" id="IPR007120">
    <property type="entry name" value="DNA-dir_RNAP_su2_dom"/>
</dbReference>
<dbReference type="InterPro" id="IPR037033">
    <property type="entry name" value="DNA-dir_RNAP_su2_hyb_sf"/>
</dbReference>
<dbReference type="InterPro" id="IPR010243">
    <property type="entry name" value="RNA_pol_bsu_bac"/>
</dbReference>
<dbReference type="InterPro" id="IPR007121">
    <property type="entry name" value="RNA_pol_bsu_CS"/>
</dbReference>
<dbReference type="InterPro" id="IPR007644">
    <property type="entry name" value="RNA_pol_bsu_protrusion"/>
</dbReference>
<dbReference type="InterPro" id="IPR007642">
    <property type="entry name" value="RNA_pol_Rpb2_2"/>
</dbReference>
<dbReference type="InterPro" id="IPR037034">
    <property type="entry name" value="RNA_pol_Rpb2_2_sf"/>
</dbReference>
<dbReference type="InterPro" id="IPR007645">
    <property type="entry name" value="RNA_pol_Rpb2_3"/>
</dbReference>
<dbReference type="InterPro" id="IPR007641">
    <property type="entry name" value="RNA_pol_Rpb2_7"/>
</dbReference>
<dbReference type="InterPro" id="IPR014724">
    <property type="entry name" value="RNA_pol_RPB2_OB-fold"/>
</dbReference>
<dbReference type="NCBIfam" id="NF001616">
    <property type="entry name" value="PRK00405.1"/>
    <property type="match status" value="1"/>
</dbReference>
<dbReference type="NCBIfam" id="TIGR02013">
    <property type="entry name" value="rpoB"/>
    <property type="match status" value="1"/>
</dbReference>
<dbReference type="PANTHER" id="PTHR20856">
    <property type="entry name" value="DNA-DIRECTED RNA POLYMERASE I SUBUNIT 2"/>
    <property type="match status" value="1"/>
</dbReference>
<dbReference type="Pfam" id="PF04563">
    <property type="entry name" value="RNA_pol_Rpb2_1"/>
    <property type="match status" value="1"/>
</dbReference>
<dbReference type="Pfam" id="PF04561">
    <property type="entry name" value="RNA_pol_Rpb2_2"/>
    <property type="match status" value="2"/>
</dbReference>
<dbReference type="Pfam" id="PF04565">
    <property type="entry name" value="RNA_pol_Rpb2_3"/>
    <property type="match status" value="1"/>
</dbReference>
<dbReference type="Pfam" id="PF10385">
    <property type="entry name" value="RNA_pol_Rpb2_45"/>
    <property type="match status" value="1"/>
</dbReference>
<dbReference type="Pfam" id="PF00562">
    <property type="entry name" value="RNA_pol_Rpb2_6"/>
    <property type="match status" value="1"/>
</dbReference>
<dbReference type="Pfam" id="PF04560">
    <property type="entry name" value="RNA_pol_Rpb2_7"/>
    <property type="match status" value="1"/>
</dbReference>
<dbReference type="SUPFAM" id="SSF64484">
    <property type="entry name" value="beta and beta-prime subunits of DNA dependent RNA-polymerase"/>
    <property type="match status" value="1"/>
</dbReference>
<dbReference type="PROSITE" id="PS01166">
    <property type="entry name" value="RNA_POL_BETA"/>
    <property type="match status" value="1"/>
</dbReference>
<evidence type="ECO:0000255" key="1">
    <source>
        <dbReference type="HAMAP-Rule" id="MF_01321"/>
    </source>
</evidence>
<name>RPOB_PARL1</name>
<gene>
    <name evidence="1" type="primary">rpoB</name>
    <name type="ordered locus">Plav_2729</name>
</gene>
<accession>A7HWQ4</accession>
<comment type="function">
    <text evidence="1">DNA-dependent RNA polymerase catalyzes the transcription of DNA into RNA using the four ribonucleoside triphosphates as substrates.</text>
</comment>
<comment type="catalytic activity">
    <reaction evidence="1">
        <text>RNA(n) + a ribonucleoside 5'-triphosphate = RNA(n+1) + diphosphate</text>
        <dbReference type="Rhea" id="RHEA:21248"/>
        <dbReference type="Rhea" id="RHEA-COMP:14527"/>
        <dbReference type="Rhea" id="RHEA-COMP:17342"/>
        <dbReference type="ChEBI" id="CHEBI:33019"/>
        <dbReference type="ChEBI" id="CHEBI:61557"/>
        <dbReference type="ChEBI" id="CHEBI:140395"/>
        <dbReference type="EC" id="2.7.7.6"/>
    </reaction>
</comment>
<comment type="subunit">
    <text evidence="1">The RNAP catalytic core consists of 2 alpha, 1 beta, 1 beta' and 1 omega subunit. When a sigma factor is associated with the core the holoenzyme is formed, which can initiate transcription.</text>
</comment>
<comment type="similarity">
    <text evidence="1">Belongs to the RNA polymerase beta chain family.</text>
</comment>
<feature type="chain" id="PRO_1000073239" description="DNA-directed RNA polymerase subunit beta">
    <location>
        <begin position="1"/>
        <end position="1362"/>
    </location>
</feature>
<reference key="1">
    <citation type="journal article" date="2011" name="Stand. Genomic Sci.">
        <title>Complete genome sequence of Parvibaculum lavamentivorans type strain (DS-1(T)).</title>
        <authorList>
            <person name="Schleheck D."/>
            <person name="Weiss M."/>
            <person name="Pitluck S."/>
            <person name="Bruce D."/>
            <person name="Land M.L."/>
            <person name="Han S."/>
            <person name="Saunders E."/>
            <person name="Tapia R."/>
            <person name="Detter C."/>
            <person name="Brettin T."/>
            <person name="Han J."/>
            <person name="Woyke T."/>
            <person name="Goodwin L."/>
            <person name="Pennacchio L."/>
            <person name="Nolan M."/>
            <person name="Cook A.M."/>
            <person name="Kjelleberg S."/>
            <person name="Thomas T."/>
        </authorList>
    </citation>
    <scope>NUCLEOTIDE SEQUENCE [LARGE SCALE GENOMIC DNA]</scope>
    <source>
        <strain>DS-1 / DSM 13023 / NCIMB 13966</strain>
    </source>
</reference>